<keyword id="KW-0378">Hydrolase</keyword>
<keyword id="KW-0460">Magnesium</keyword>
<keyword id="KW-0479">Metal-binding</keyword>
<keyword id="KW-0520">NAD</keyword>
<keyword id="KW-0786">Thiamine pyrophosphate</keyword>
<proteinExistence type="inferred from homology"/>
<organism>
    <name type="scientific">Bacillus cereus (strain AH820)</name>
    <dbReference type="NCBI Taxonomy" id="405535"/>
    <lineage>
        <taxon>Bacteria</taxon>
        <taxon>Bacillati</taxon>
        <taxon>Bacillota</taxon>
        <taxon>Bacilli</taxon>
        <taxon>Bacillales</taxon>
        <taxon>Bacillaceae</taxon>
        <taxon>Bacillus</taxon>
        <taxon>Bacillus cereus group</taxon>
    </lineage>
</organism>
<gene>
    <name evidence="1" type="primary">iolD</name>
    <name type="ordered locus">BCAH820_2530</name>
</gene>
<feature type="chain" id="PRO_1000187309" description="3D-(3,5/4)-trihydroxycyclohexane-1,2-dione hydrolase">
    <location>
        <begin position="1"/>
        <end position="644"/>
    </location>
</feature>
<feature type="region of interest" description="Thiamine pyrophosphate binding" evidence="1">
    <location>
        <begin position="442"/>
        <end position="522"/>
    </location>
</feature>
<feature type="binding site" evidence="1">
    <location>
        <position position="65"/>
    </location>
    <ligand>
        <name>thiamine diphosphate</name>
        <dbReference type="ChEBI" id="CHEBI:58937"/>
    </ligand>
</feature>
<feature type="binding site" evidence="1">
    <location>
        <position position="493"/>
    </location>
    <ligand>
        <name>Mg(2+)</name>
        <dbReference type="ChEBI" id="CHEBI:18420"/>
    </ligand>
</feature>
<feature type="binding site" evidence="1">
    <location>
        <position position="520"/>
    </location>
    <ligand>
        <name>Mg(2+)</name>
        <dbReference type="ChEBI" id="CHEBI:18420"/>
    </ligand>
</feature>
<evidence type="ECO:0000255" key="1">
    <source>
        <dbReference type="HAMAP-Rule" id="MF_01669"/>
    </source>
</evidence>
<dbReference type="EC" id="3.7.1.22" evidence="1"/>
<dbReference type="EMBL" id="CP001283">
    <property type="protein sequence ID" value="ACK90007.1"/>
    <property type="molecule type" value="Genomic_DNA"/>
</dbReference>
<dbReference type="RefSeq" id="WP_001195353.1">
    <property type="nucleotide sequence ID" value="NC_011773.1"/>
</dbReference>
<dbReference type="SMR" id="B7JPM3"/>
<dbReference type="KEGG" id="bcu:BCAH820_2530"/>
<dbReference type="HOGENOM" id="CLU_013748_6_0_9"/>
<dbReference type="UniPathway" id="UPA00076">
    <property type="reaction ID" value="UER00145"/>
</dbReference>
<dbReference type="Proteomes" id="UP000001363">
    <property type="component" value="Chromosome"/>
</dbReference>
<dbReference type="GO" id="GO:0005948">
    <property type="term" value="C:acetolactate synthase complex"/>
    <property type="evidence" value="ECO:0007669"/>
    <property type="project" value="TreeGrafter"/>
</dbReference>
<dbReference type="GO" id="GO:0102481">
    <property type="term" value="F:3D-(3,5/4)-trihydroxycyclohexane-1,2-dione hydrolase activity"/>
    <property type="evidence" value="ECO:0007669"/>
    <property type="project" value="UniProtKB-EC"/>
</dbReference>
<dbReference type="GO" id="GO:0003984">
    <property type="term" value="F:acetolactate synthase activity"/>
    <property type="evidence" value="ECO:0007669"/>
    <property type="project" value="TreeGrafter"/>
</dbReference>
<dbReference type="GO" id="GO:0050660">
    <property type="term" value="F:flavin adenine dinucleotide binding"/>
    <property type="evidence" value="ECO:0007669"/>
    <property type="project" value="TreeGrafter"/>
</dbReference>
<dbReference type="GO" id="GO:0000287">
    <property type="term" value="F:magnesium ion binding"/>
    <property type="evidence" value="ECO:0007669"/>
    <property type="project" value="UniProtKB-UniRule"/>
</dbReference>
<dbReference type="GO" id="GO:0030976">
    <property type="term" value="F:thiamine pyrophosphate binding"/>
    <property type="evidence" value="ECO:0007669"/>
    <property type="project" value="UniProtKB-UniRule"/>
</dbReference>
<dbReference type="GO" id="GO:0019310">
    <property type="term" value="P:inositol catabolic process"/>
    <property type="evidence" value="ECO:0007669"/>
    <property type="project" value="UniProtKB-UniRule"/>
</dbReference>
<dbReference type="GO" id="GO:0009097">
    <property type="term" value="P:isoleucine biosynthetic process"/>
    <property type="evidence" value="ECO:0007669"/>
    <property type="project" value="TreeGrafter"/>
</dbReference>
<dbReference type="GO" id="GO:0009099">
    <property type="term" value="P:L-valine biosynthetic process"/>
    <property type="evidence" value="ECO:0007669"/>
    <property type="project" value="TreeGrafter"/>
</dbReference>
<dbReference type="CDD" id="cd02003">
    <property type="entry name" value="TPP_IolD"/>
    <property type="match status" value="1"/>
</dbReference>
<dbReference type="CDD" id="cd07035">
    <property type="entry name" value="TPP_PYR_POX_like"/>
    <property type="match status" value="1"/>
</dbReference>
<dbReference type="FunFam" id="3.40.50.1220:FF:000040">
    <property type="entry name" value="3D-(3,5/4)-trihydroxycyclohexane-1,2-dione hydrolase"/>
    <property type="match status" value="1"/>
</dbReference>
<dbReference type="FunFam" id="3.40.50.970:FF:000056">
    <property type="entry name" value="3D-(3,5/4)-trihydroxycyclohexane-1,2-dione hydrolase"/>
    <property type="match status" value="1"/>
</dbReference>
<dbReference type="FunFam" id="3.40.50.970:FF:000072">
    <property type="entry name" value="3D-(3,5/4)-trihydroxycyclohexane-1,2-dione hydrolase"/>
    <property type="match status" value="1"/>
</dbReference>
<dbReference type="Gene3D" id="3.40.50.970">
    <property type="match status" value="2"/>
</dbReference>
<dbReference type="Gene3D" id="3.40.50.1220">
    <property type="entry name" value="TPP-binding domain"/>
    <property type="match status" value="1"/>
</dbReference>
<dbReference type="HAMAP" id="MF_01669">
    <property type="entry name" value="IolD"/>
    <property type="match status" value="1"/>
</dbReference>
<dbReference type="InterPro" id="IPR029035">
    <property type="entry name" value="DHS-like_NAD/FAD-binding_dom"/>
</dbReference>
<dbReference type="InterPro" id="IPR030817">
    <property type="entry name" value="Myo_inos_IolD"/>
</dbReference>
<dbReference type="InterPro" id="IPR023757">
    <property type="entry name" value="THcHDO_hydrolase_firmi"/>
</dbReference>
<dbReference type="InterPro" id="IPR029061">
    <property type="entry name" value="THDP-binding"/>
</dbReference>
<dbReference type="InterPro" id="IPR012000">
    <property type="entry name" value="Thiamin_PyroP_enz_cen_dom"/>
</dbReference>
<dbReference type="InterPro" id="IPR012001">
    <property type="entry name" value="Thiamin_PyroP_enz_TPP-bd_dom"/>
</dbReference>
<dbReference type="InterPro" id="IPR000399">
    <property type="entry name" value="TPP-bd_CS"/>
</dbReference>
<dbReference type="InterPro" id="IPR045229">
    <property type="entry name" value="TPP_enz"/>
</dbReference>
<dbReference type="InterPro" id="IPR011766">
    <property type="entry name" value="TPP_enzyme_TPP-bd"/>
</dbReference>
<dbReference type="NCBIfam" id="TIGR04377">
    <property type="entry name" value="myo_inos_iolD"/>
    <property type="match status" value="1"/>
</dbReference>
<dbReference type="PANTHER" id="PTHR18968:SF9">
    <property type="entry name" value="3D-(3,5_4)-TRIHYDROXYCYCLOHEXANE-1,2-DIONE HYDROLASE"/>
    <property type="match status" value="1"/>
</dbReference>
<dbReference type="PANTHER" id="PTHR18968">
    <property type="entry name" value="THIAMINE PYROPHOSPHATE ENZYMES"/>
    <property type="match status" value="1"/>
</dbReference>
<dbReference type="Pfam" id="PF02775">
    <property type="entry name" value="TPP_enzyme_C"/>
    <property type="match status" value="1"/>
</dbReference>
<dbReference type="Pfam" id="PF00205">
    <property type="entry name" value="TPP_enzyme_M"/>
    <property type="match status" value="1"/>
</dbReference>
<dbReference type="Pfam" id="PF02776">
    <property type="entry name" value="TPP_enzyme_N"/>
    <property type="match status" value="1"/>
</dbReference>
<dbReference type="SUPFAM" id="SSF52467">
    <property type="entry name" value="DHS-like NAD/FAD-binding domain"/>
    <property type="match status" value="1"/>
</dbReference>
<dbReference type="SUPFAM" id="SSF52518">
    <property type="entry name" value="Thiamin diphosphate-binding fold (THDP-binding)"/>
    <property type="match status" value="2"/>
</dbReference>
<dbReference type="PROSITE" id="PS00187">
    <property type="entry name" value="TPP_ENZYMES"/>
    <property type="match status" value="1"/>
</dbReference>
<comment type="function">
    <text evidence="1">Involved in the cleavage of the C1-C2 bond of 3D-(3,5/4)-trihydroxycyclohexane-1,2-dione (THcHDO) to yield 5-deoxy-glucuronate (5DG).</text>
</comment>
<comment type="catalytic activity">
    <reaction evidence="1">
        <text>3D-3,5/4-trihydroxycyclohexane-1,2-dione + H2O = 5-deoxy-D-glucuronate + H(+)</text>
        <dbReference type="Rhea" id="RHEA:25836"/>
        <dbReference type="ChEBI" id="CHEBI:15377"/>
        <dbReference type="ChEBI" id="CHEBI:15378"/>
        <dbReference type="ChEBI" id="CHEBI:28446"/>
        <dbReference type="ChEBI" id="CHEBI:58852"/>
        <dbReference type="EC" id="3.7.1.22"/>
    </reaction>
</comment>
<comment type="cofactor">
    <cofactor evidence="1">
        <name>Mg(2+)</name>
        <dbReference type="ChEBI" id="CHEBI:18420"/>
    </cofactor>
    <text evidence="1">Binds 1 Mg(2+) ion per subunit.</text>
</comment>
<comment type="cofactor">
    <cofactor evidence="1">
        <name>thiamine diphosphate</name>
        <dbReference type="ChEBI" id="CHEBI:58937"/>
    </cofactor>
    <text evidence="1">Binds 1 thiamine pyrophosphate per subunit.</text>
</comment>
<comment type="pathway">
    <text evidence="1">Polyol metabolism; myo-inositol degradation into acetyl-CoA; acetyl-CoA from myo-inositol: step 3/7.</text>
</comment>
<comment type="similarity">
    <text evidence="1">Belongs to the TPP enzyme family.</text>
</comment>
<reference key="1">
    <citation type="submission" date="2008-10" db="EMBL/GenBank/DDBJ databases">
        <title>Genome sequence of Bacillus cereus AH820.</title>
        <authorList>
            <person name="Dodson R.J."/>
            <person name="Durkin A.S."/>
            <person name="Rosovitz M.J."/>
            <person name="Rasko D.A."/>
            <person name="Hoffmaster A."/>
            <person name="Ravel J."/>
            <person name="Sutton G."/>
        </authorList>
    </citation>
    <scope>NUCLEOTIDE SEQUENCE [LARGE SCALE GENOMIC DNA]</scope>
    <source>
        <strain>AH820</strain>
    </source>
</reference>
<protein>
    <recommendedName>
        <fullName evidence="1">3D-(3,5/4)-trihydroxycyclohexane-1,2-dione hydrolase</fullName>
        <shortName evidence="1">THcHDO hydrolase</shortName>
        <ecNumber evidence="1">3.7.1.22</ecNumber>
    </recommendedName>
</protein>
<name>IOLD_BACC0</name>
<accession>B7JPM3</accession>
<sequence>MQTVRMTTAQALVKFLNQQYVEFDGKQQKFVKGIFTIFGHGNVVGLGQALEEDAGELEVYQGRNEQGMANAAMAFAKQKHRKQIMACTSSVGPGSANMITSAATASANNIPVLLLPGDVFATRQPDPVLQQIEQTHDLSISTNDAFRAVSKYWDRINRPEQLMTAMIQAMRVLTNPADTGAVTICLPQDVQGEAWDFPSYFFQKRVHRIERRLPTKASLADAVEMIKRKKKPVMICGGGVRYAEAAEELKQFAETFHIPFGETQAGKSAIESSHPYNLGGIGVTGNVAANTIAKEADLVIGIGTRFTDFTTASKQLFQNEEVEFLNINISEFHANKLDALKVIADAKEALLALIDELQEIDYQSSYTVEIADAKDAWETELSRLHNIRFTCQDFTPEVEGHFDENLNEYVDALGTQLTQTAVIGQINTLLDEDAIIVGAAGSLPGDLQRMWASRKPNTYHMEYGYSCMGYEVAGALGAKLAEPSKEVYAMVGDGSYQMLHSELVTSLQENKKINVLLFDNSGFGCINNLQMGNGMGSFGTEFRYRNQETRKLDGAIMKIDFAASAAGYGVKTYHVTSLEQLQEALIDAKKQTVSTLIDIKVLPKTMTNGYESWWHVGVAEVSKNQSVQAAYESKVSNLQQARSY</sequence>